<protein>
    <recommendedName>
        <fullName>Linear gramicidin synthase subunit A</fullName>
    </recommendedName>
    <domain>
        <recommendedName>
            <fullName>ATP-dependent valine/leucine adenylase</fullName>
            <shortName>Val/LeuA</shortName>
        </recommendedName>
        <alternativeName>
            <fullName>Valine/leucine activase</fullName>
        </alternativeName>
    </domain>
    <domain>
        <recommendedName>
            <fullName>ATP-dependent glycine adenylase</fullName>
            <shortName>GlyA</shortName>
        </recommendedName>
        <alternativeName>
            <fullName>Glycine activase</fullName>
        </alternativeName>
    </domain>
</protein>
<accession>Q70LM7</accession>
<reference key="1">
    <citation type="journal article" date="2004" name="J. Biol. Chem.">
        <title>The linear pentadecapeptide gramicidin is assembled by four multimodular nonribosomal peptide synthetases that comprise 16 modules with 57 catalytic domains.</title>
        <authorList>
            <person name="Kessler N."/>
            <person name="Schuhmann H."/>
            <person name="Morneweg S."/>
            <person name="Linne U."/>
            <person name="Marahiel M.A."/>
        </authorList>
    </citation>
    <scope>NUCLEOTIDE SEQUENCE [GENOMIC DNA]</scope>
    <source>
        <strain>ATCC 8185 / DSM 362 / JCM 20017 / IAM 1031 / NBRC 3331 / NCDO 717 / NCIMB 8598 / NRS 751 / BG</strain>
    </source>
</reference>
<proteinExistence type="evidence at protein level"/>
<gene>
    <name type="primary">lgrA</name>
</gene>
<evidence type="ECO:0000255" key="1">
    <source>
        <dbReference type="PROSITE-ProRule" id="PRU00258"/>
    </source>
</evidence>
<evidence type="ECO:0000305" key="2"/>
<evidence type="ECO:0007829" key="3">
    <source>
        <dbReference type="PDB" id="5ES5"/>
    </source>
</evidence>
<evidence type="ECO:0007829" key="4">
    <source>
        <dbReference type="PDB" id="5ES6"/>
    </source>
</evidence>
<evidence type="ECO:0007829" key="5">
    <source>
        <dbReference type="PDB" id="5ES8"/>
    </source>
</evidence>
<evidence type="ECO:0007829" key="6">
    <source>
        <dbReference type="PDB" id="6MFW"/>
    </source>
</evidence>
<evidence type="ECO:0007829" key="7">
    <source>
        <dbReference type="PDB" id="6MFX"/>
    </source>
</evidence>
<evidence type="ECO:0007829" key="8">
    <source>
        <dbReference type="PDB" id="6MFY"/>
    </source>
</evidence>
<keyword id="KW-0002">3D-structure</keyword>
<keyword id="KW-0045">Antibiotic biosynthesis</keyword>
<keyword id="KW-0436">Ligase</keyword>
<keyword id="KW-0511">Multifunctional enzyme</keyword>
<keyword id="KW-0596">Phosphopantetheine</keyword>
<keyword id="KW-0597">Phosphoprotein</keyword>
<keyword id="KW-0677">Repeat</keyword>
<sequence length="2273" mass="257859">MRILFLTTFMSKGNKVVRYLESLHHEVVICQEKVHAQSANLQEIDWIVSYAYGYILDKEIVSRFRGRIINLHPSLLPWNKGRDPVFWSVWDETPKGVTIHLIDEHVDTGDILVQEEIAFADEDTLLDCYNKANQAIEELFIREWENIVHGRIAPYRQTAGGTLHFKADRDFYKNLNMTTVRELLALKRLCAEPKRGEKPIDKTFHQLFEQQVEMTPDHVAVVDRGQSLTYKQLNERANQLAHHLRGKGVKPDDQVAIMLDKSLDMIVSILAVMKAGGAYVPIDPDYPGERIAYMLADSSAAILLTNALHEEKANGACDIIDVHDPDSYSENTNNLPHVNRPDDLVYVMYTSGSTGLAKGVMIEHHNLVNFCEWYRPYFGVTPADKALVYSSFSFDGSALDIFTHLLAGAALHIVPSERKYDLDALNDYCNQEGITISYLPTGAAEQFMQMDNQSFRVVITGGDVLKKIERNGTYKLYNGYGPTECTIMVTMFEVDKPYANIPIGKPIDRTRILILDEALALQPIGVAGELFIVGEGLGRGYLNRPELTAEKFIVHPQTGERMYRTGDRARFLPDGNIEFLGRLDNLVKIRGYRIEPGEIEPFLMNHPLIELTTVLAKEQADGRKYLVGYYVAPEEIPHGELREWLGNDLPDYMIPTYFVHMKAFPLTANGKVDRRALPDVQADAELLGEDYVAPTDELEQQLAQVWSHVLGIPQMGIDDHFLERGGDSIKVMQLIHQLKNIGLSLRYDQLFTHPTIRQLKRLLTEQKQVSLEPLRELDEQAEYETSAVEKRMYIIQQQDVESIAYNVVYTINFPLTVDTEQIRVALEQLVLRHEGLRSTYHMRGDEIVKRIVPRAELSFVRQTGEEESVQSLLAEQIKPFDLAKAPLLRAGVIETADKKVLWFDSHHILLDGLSKSILARELQALLGQQVLSPVEKTYKSFARWQNEWFASDEYEQQIAYWKTLLQGELPAVQLPTKKRPPQLTFDGAIQMYRVNPEITRKLKATAAKHDLTLYMLMLTIVSIWLSKMNSDSNQVILGTVTDGRQHPDTRELLGMFVNTLPLLLSIDHEESFLHNLQQVKAKLLPALQNQYVPFDKILEAARVKREGNRHPLFDVMFMMQGAPETELESNMHHINAGISKFDLTLEVLERENGLNIVFEYNTHLFDEGMILRMVAQFEHLLLQAVHGLDQQVKRFELVTEDEKRDLFLRVNDTAKAYPNKLIMSMLEDWAAATPDKTALVFREQRVTYRELNERVNQLAHTLREKGVQPDDLVMLMAERSVEMMVAIFAVLKAGGAYLPIDPHSPAERIAYIFADSGAKLVLAQSPFVEKASMAEVVLDLNSASSYAADTSNPPLVNQPGDLVYVMYTSGSTGKPKGVMIEHGALLNVLHGMQDEYPLLQDDAFLLKTTYIFDISVAEIFGWVPGRGKLVILEPEAEKNPKAIWQAVVGAGITHINFVPSMLIPFVEYLEGRTEANRLRYILACGEAMPDELVPKVYEVLPEVKLENIYGPTEATIYASRYSLAKGSQESPVPIGKPLPNYRMYIINRHGQLQPIGVPGELCIAGASLARGYLNNPALTEEKFTPHPLEKGERIYRTGDLARYREDGNIEYLGRMDHQVKIRGYRIELDEIRSKLIQEETIQDAVVVARNDQNGQAYLCAYLLSEQEWTVGQLRELLRRELPEYMIPAHFVLLKQFPLTANGKLDRKALPEPDGSVKAEAEYAAPRTELEATLAHIWGEVLGIERIGIRDNFFELGGDSIKGLQIASRLQRINWTMVINHLFLYPTIEQIAPFVTSEQVVIEQGLVEGLVKLTPIQRDFFERITADRHHWNQARMLFCRDGLEREWVVETLNALVLQHDALRMRFRETEQGIVQFHQGNEGKLFGFHVFDCTEELDIAKKVEEQANVLQSGMNLQEGPLVQAALFMTRTGDHLLLAIHQLVVDEASWRIILEDFQTAYKQKAAGEPIALPNKTHSYQSWAEELHNAANSKKLTSELGYWRKIASSPTRPLPQDQEPLSRTEQSTATAAIRFAKAETANLLHEANHAYQTEAQELLLAALGMALRDWTRADDVTVFLEKDGRESAAKGLDVSRTVGWFHSLFPVVLSAARSGDPGEQIKQVKEMLRAIPHQGSGYSILKQLTDLRHKHPDDFTLQPKIVVHAWEQLDAGLETDWLTLSHLPQGSVRGANAERMQQLDVFSKISNGELTIHIQYHRDEYRKATIDKLLELYQAHLNALLAHCLQKTETELTPSDFVDKNLSRSELDDIMDLISDL</sequence>
<organism>
    <name type="scientific">Brevibacillus parabrevis</name>
    <dbReference type="NCBI Taxonomy" id="54914"/>
    <lineage>
        <taxon>Bacteria</taxon>
        <taxon>Bacillati</taxon>
        <taxon>Bacillota</taxon>
        <taxon>Bacilli</taxon>
        <taxon>Bacillales</taxon>
        <taxon>Paenibacillaceae</taxon>
        <taxon>Brevibacillus</taxon>
    </lineage>
</organism>
<feature type="chain" id="PRO_0000193089" description="Linear gramicidin synthase subunit A">
    <location>
        <begin position="1"/>
        <end position="2273"/>
    </location>
</feature>
<feature type="domain" description="Carrier 1" evidence="1">
    <location>
        <begin position="693"/>
        <end position="767"/>
    </location>
</feature>
<feature type="domain" description="Carrier 2" evidence="1">
    <location>
        <begin position="1724"/>
        <end position="1798"/>
    </location>
</feature>
<feature type="region of interest" description="GART">
    <location>
        <begin position="1"/>
        <end position="144"/>
    </location>
</feature>
<feature type="modified residue" description="O-(pantetheine 4'-phosphoryl)serine" evidence="1">
    <location>
        <position position="728"/>
    </location>
</feature>
<feature type="modified residue" description="O-(pantetheine 4'-phosphoryl)serine" evidence="1">
    <location>
        <position position="1759"/>
    </location>
</feature>
<feature type="strand" evidence="7">
    <location>
        <begin position="2"/>
        <end position="9"/>
    </location>
</feature>
<feature type="turn" evidence="7">
    <location>
        <begin position="10"/>
        <end position="13"/>
    </location>
</feature>
<feature type="helix" evidence="7">
    <location>
        <begin position="14"/>
        <end position="22"/>
    </location>
</feature>
<feature type="strand" evidence="7">
    <location>
        <begin position="25"/>
        <end position="30"/>
    </location>
</feature>
<feature type="strand" evidence="7">
    <location>
        <begin position="36"/>
        <end position="38"/>
    </location>
</feature>
<feature type="turn" evidence="7">
    <location>
        <begin position="39"/>
        <end position="43"/>
    </location>
</feature>
<feature type="strand" evidence="7">
    <location>
        <begin position="45"/>
        <end position="51"/>
    </location>
</feature>
<feature type="helix" evidence="7">
    <location>
        <begin position="58"/>
        <end position="63"/>
    </location>
</feature>
<feature type="turn" evidence="7">
    <location>
        <begin position="64"/>
        <end position="66"/>
    </location>
</feature>
<feature type="strand" evidence="7">
    <location>
        <begin position="68"/>
        <end position="74"/>
    </location>
</feature>
<feature type="turn" evidence="7">
    <location>
        <begin position="76"/>
        <end position="79"/>
    </location>
</feature>
<feature type="strand" evidence="7">
    <location>
        <begin position="80"/>
        <end position="82"/>
    </location>
</feature>
<feature type="helix" evidence="7">
    <location>
        <begin position="84"/>
        <end position="90"/>
    </location>
</feature>
<feature type="strand" evidence="7">
    <location>
        <begin position="96"/>
        <end position="101"/>
    </location>
</feature>
<feature type="strand" evidence="4">
    <location>
        <begin position="104"/>
        <end position="107"/>
    </location>
</feature>
<feature type="strand" evidence="7">
    <location>
        <begin position="111"/>
        <end position="116"/>
    </location>
</feature>
<feature type="helix" evidence="7">
    <location>
        <begin position="125"/>
        <end position="143"/>
    </location>
</feature>
<feature type="helix" evidence="7">
    <location>
        <begin position="145"/>
        <end position="148"/>
    </location>
</feature>
<feature type="helix" evidence="7">
    <location>
        <begin position="166"/>
        <end position="172"/>
    </location>
</feature>
<feature type="helix" evidence="7">
    <location>
        <begin position="180"/>
        <end position="190"/>
    </location>
</feature>
<feature type="helix" evidence="7">
    <location>
        <begin position="204"/>
        <end position="214"/>
    </location>
</feature>
<feature type="strand" evidence="7">
    <location>
        <begin position="218"/>
        <end position="223"/>
    </location>
</feature>
<feature type="strand" evidence="7">
    <location>
        <begin position="226"/>
        <end position="229"/>
    </location>
</feature>
<feature type="helix" evidence="7">
    <location>
        <begin position="230"/>
        <end position="246"/>
    </location>
</feature>
<feature type="strand" evidence="7">
    <location>
        <begin position="254"/>
        <end position="257"/>
    </location>
</feature>
<feature type="helix" evidence="7">
    <location>
        <begin position="263"/>
        <end position="275"/>
    </location>
</feature>
<feature type="strand" evidence="7">
    <location>
        <begin position="278"/>
        <end position="281"/>
    </location>
</feature>
<feature type="helix" evidence="7">
    <location>
        <begin position="288"/>
        <end position="297"/>
    </location>
</feature>
<feature type="strand" evidence="7">
    <location>
        <begin position="302"/>
        <end position="305"/>
    </location>
</feature>
<feature type="helix" evidence="7">
    <location>
        <begin position="307"/>
        <end position="310"/>
    </location>
</feature>
<feature type="helix" evidence="7">
    <location>
        <begin position="311"/>
        <end position="313"/>
    </location>
</feature>
<feature type="strand" evidence="7">
    <location>
        <begin position="317"/>
        <end position="321"/>
    </location>
</feature>
<feature type="helix" evidence="7">
    <location>
        <begin position="325"/>
        <end position="327"/>
    </location>
</feature>
<feature type="strand" evidence="7">
    <location>
        <begin position="343"/>
        <end position="349"/>
    </location>
</feature>
<feature type="strand" evidence="7">
    <location>
        <begin position="351"/>
        <end position="353"/>
    </location>
</feature>
<feature type="turn" evidence="7">
    <location>
        <begin position="354"/>
        <end position="356"/>
    </location>
</feature>
<feature type="strand" evidence="7">
    <location>
        <begin position="359"/>
        <end position="363"/>
    </location>
</feature>
<feature type="helix" evidence="7">
    <location>
        <begin position="364"/>
        <end position="378"/>
    </location>
</feature>
<feature type="strand" evidence="7">
    <location>
        <begin position="385"/>
        <end position="388"/>
    </location>
</feature>
<feature type="helix" evidence="7">
    <location>
        <begin position="396"/>
        <end position="405"/>
    </location>
</feature>
<feature type="turn" evidence="7">
    <location>
        <begin position="406"/>
        <end position="408"/>
    </location>
</feature>
<feature type="strand" evidence="7">
    <location>
        <begin position="410"/>
        <end position="413"/>
    </location>
</feature>
<feature type="helix" evidence="7">
    <location>
        <begin position="416"/>
        <end position="418"/>
    </location>
</feature>
<feature type="helix" evidence="7">
    <location>
        <begin position="422"/>
        <end position="432"/>
    </location>
</feature>
<feature type="strand" evidence="7">
    <location>
        <begin position="436"/>
        <end position="438"/>
    </location>
</feature>
<feature type="helix" evidence="7">
    <location>
        <begin position="441"/>
        <end position="447"/>
    </location>
</feature>
<feature type="strand" evidence="7">
    <location>
        <begin position="456"/>
        <end position="463"/>
    </location>
</feature>
<feature type="strand" evidence="7">
    <location>
        <begin position="471"/>
        <end position="473"/>
    </location>
</feature>
<feature type="strand" evidence="7">
    <location>
        <begin position="475"/>
        <end position="480"/>
    </location>
</feature>
<feature type="helix" evidence="7">
    <location>
        <begin position="483"/>
        <end position="485"/>
    </location>
</feature>
<feature type="strand" evidence="7">
    <location>
        <begin position="489"/>
        <end position="494"/>
    </location>
</feature>
<feature type="strand" evidence="7">
    <location>
        <begin position="504"/>
        <end position="506"/>
    </location>
</feature>
<feature type="strand" evidence="7">
    <location>
        <begin position="510"/>
        <end position="515"/>
    </location>
</feature>
<feature type="strand" evidence="7">
    <location>
        <begin position="528"/>
        <end position="534"/>
    </location>
</feature>
<feature type="strand" evidence="4">
    <location>
        <begin position="539"/>
        <end position="541"/>
    </location>
</feature>
<feature type="helix" evidence="7">
    <location>
        <begin position="545"/>
        <end position="551"/>
    </location>
</feature>
<feature type="strand" evidence="7">
    <location>
        <begin position="552"/>
        <end position="554"/>
    </location>
</feature>
<feature type="turn" evidence="7">
    <location>
        <begin position="556"/>
        <end position="558"/>
    </location>
</feature>
<feature type="strand" evidence="7">
    <location>
        <begin position="561"/>
        <end position="571"/>
    </location>
</feature>
<feature type="strand" evidence="7">
    <location>
        <begin position="577"/>
        <end position="584"/>
    </location>
</feature>
<feature type="strand" evidence="7">
    <location>
        <begin position="587"/>
        <end position="591"/>
    </location>
</feature>
<feature type="strand" evidence="8">
    <location>
        <begin position="592"/>
        <end position="594"/>
    </location>
</feature>
<feature type="helix" evidence="7">
    <location>
        <begin position="596"/>
        <end position="598"/>
    </location>
</feature>
<feature type="helix" evidence="7">
    <location>
        <begin position="600"/>
        <end position="604"/>
    </location>
</feature>
<feature type="strand" evidence="3">
    <location>
        <begin position="606"/>
        <end position="608"/>
    </location>
</feature>
<feature type="strand" evidence="7">
    <location>
        <begin position="611"/>
        <end position="618"/>
    </location>
</feature>
<feature type="strand" evidence="5">
    <location>
        <begin position="620"/>
        <end position="622"/>
    </location>
</feature>
<feature type="strand" evidence="7">
    <location>
        <begin position="624"/>
        <end position="631"/>
    </location>
</feature>
<feature type="helix" evidence="7">
    <location>
        <begin position="638"/>
        <end position="645"/>
    </location>
</feature>
<feature type="turn" evidence="7">
    <location>
        <begin position="646"/>
        <end position="648"/>
    </location>
</feature>
<feature type="helix" evidence="7">
    <location>
        <begin position="651"/>
        <end position="653"/>
    </location>
</feature>
<feature type="strand" evidence="7">
    <location>
        <begin position="656"/>
        <end position="663"/>
    </location>
</feature>
<feature type="strand" evidence="7">
    <location>
        <begin position="670"/>
        <end position="672"/>
    </location>
</feature>
<feature type="helix" evidence="7">
    <location>
        <begin position="674"/>
        <end position="676"/>
    </location>
</feature>
<feature type="helix" evidence="7">
    <location>
        <begin position="697"/>
        <end position="710"/>
    </location>
</feature>
<feature type="turn" evidence="7">
    <location>
        <begin position="721"/>
        <end position="725"/>
    </location>
</feature>
<feature type="helix" evidence="7">
    <location>
        <begin position="728"/>
        <end position="738"/>
    </location>
</feature>
<feature type="helix" evidence="7">
    <location>
        <begin position="739"/>
        <end position="741"/>
    </location>
</feature>
<feature type="helix" evidence="7">
    <location>
        <begin position="747"/>
        <end position="752"/>
    </location>
</feature>
<feature type="helix" evidence="7">
    <location>
        <begin position="756"/>
        <end position="759"/>
    </location>
</feature>
<feature type="helix" evidence="7">
    <location>
        <begin position="760"/>
        <end position="762"/>
    </location>
</feature>
<feature type="helix" evidence="5">
    <location>
        <begin position="763"/>
        <end position="766"/>
    </location>
</feature>
<feature type="strand" evidence="7">
    <location>
        <begin position="781"/>
        <end position="784"/>
    </location>
</feature>
<feature type="helix" evidence="7">
    <location>
        <begin position="787"/>
        <end position="798"/>
    </location>
</feature>
<feature type="strand" evidence="7">
    <location>
        <begin position="806"/>
        <end position="813"/>
    </location>
</feature>
<feature type="helix" evidence="7">
    <location>
        <begin position="819"/>
        <end position="832"/>
    </location>
</feature>
<feature type="helix" evidence="7">
    <location>
        <begin position="834"/>
        <end position="837"/>
    </location>
</feature>
<feature type="strand" evidence="7">
    <location>
        <begin position="838"/>
        <end position="843"/>
    </location>
</feature>
<feature type="strand" evidence="7">
    <location>
        <begin position="846"/>
        <end position="851"/>
    </location>
</feature>
<feature type="strand" evidence="7">
    <location>
        <begin position="858"/>
        <end position="863"/>
    </location>
</feature>
<feature type="helix" evidence="7">
    <location>
        <begin position="866"/>
        <end position="868"/>
    </location>
</feature>
<feature type="helix" evidence="7">
    <location>
        <begin position="869"/>
        <end position="876"/>
    </location>
</feature>
<feature type="strand" evidence="7">
    <location>
        <begin position="887"/>
        <end position="894"/>
    </location>
</feature>
<feature type="strand" evidence="7">
    <location>
        <begin position="899"/>
        <end position="906"/>
    </location>
</feature>
<feature type="turn" evidence="7">
    <location>
        <begin position="907"/>
        <end position="909"/>
    </location>
</feature>
<feature type="helix" evidence="7">
    <location>
        <begin position="912"/>
        <end position="926"/>
    </location>
</feature>
<feature type="helix" evidence="7">
    <location>
        <begin position="938"/>
        <end position="948"/>
    </location>
</feature>
<feature type="helix" evidence="7">
    <location>
        <begin position="952"/>
        <end position="964"/>
    </location>
</feature>
<feature type="strand" evidence="6">
    <location>
        <begin position="965"/>
        <end position="967"/>
    </location>
</feature>
<feature type="strand" evidence="7">
    <location>
        <begin position="986"/>
        <end position="994"/>
    </location>
</feature>
<feature type="helix" evidence="7">
    <location>
        <begin position="996"/>
        <end position="1008"/>
    </location>
</feature>
<feature type="helix" evidence="7">
    <location>
        <begin position="1013"/>
        <end position="1028"/>
    </location>
</feature>
<feature type="strand" evidence="7">
    <location>
        <begin position="1033"/>
        <end position="1041"/>
    </location>
</feature>
<feature type="helix" evidence="7">
    <location>
        <begin position="1047"/>
        <end position="1049"/>
    </location>
</feature>
<feature type="strand" evidence="7">
    <location>
        <begin position="1058"/>
        <end position="1065"/>
    </location>
</feature>
<feature type="helix" evidence="7">
    <location>
        <begin position="1072"/>
        <end position="1088"/>
    </location>
</feature>
<feature type="turn" evidence="7">
    <location>
        <begin position="1089"/>
        <end position="1091"/>
    </location>
</feature>
<feature type="helix" evidence="7">
    <location>
        <begin position="1094"/>
        <end position="1100"/>
    </location>
</feature>
<feature type="strand" evidence="7">
    <location>
        <begin position="1114"/>
        <end position="1120"/>
    </location>
</feature>
<feature type="helix" evidence="7">
    <location>
        <begin position="1126"/>
        <end position="1129"/>
    </location>
</feature>
<feature type="strand" evidence="7">
    <location>
        <begin position="1131"/>
        <end position="1133"/>
    </location>
</feature>
<feature type="strand" evidence="7">
    <location>
        <begin position="1140"/>
        <end position="1150"/>
    </location>
</feature>
<feature type="strand" evidence="7">
    <location>
        <begin position="1153"/>
        <end position="1161"/>
    </location>
</feature>
<feature type="turn" evidence="7">
    <location>
        <begin position="1162"/>
        <end position="1164"/>
    </location>
</feature>
<feature type="helix" evidence="7">
    <location>
        <begin position="1167"/>
        <end position="1185"/>
    </location>
</feature>
<feature type="strand" evidence="8">
    <location>
        <begin position="1188"/>
        <end position="1191"/>
    </location>
</feature>
<feature type="helix" evidence="7">
    <location>
        <begin position="1192"/>
        <end position="1194"/>
    </location>
</feature>
<feature type="helix" evidence="8">
    <location>
        <begin position="1200"/>
        <end position="1210"/>
    </location>
</feature>
<feature type="helix" evidence="8">
    <location>
        <begin position="1222"/>
        <end position="1232"/>
    </location>
</feature>
<feature type="strand" evidence="8">
    <location>
        <begin position="1239"/>
        <end position="1241"/>
    </location>
</feature>
<feature type="helix" evidence="8">
    <location>
        <begin position="1248"/>
        <end position="1263"/>
    </location>
</feature>
<feature type="strand" evidence="8">
    <location>
        <begin position="1272"/>
        <end position="1275"/>
    </location>
</feature>
<feature type="helix" evidence="8">
    <location>
        <begin position="1281"/>
        <end position="1293"/>
    </location>
</feature>
<feature type="strand" evidence="8">
    <location>
        <begin position="1295"/>
        <end position="1299"/>
    </location>
</feature>
<feature type="helix" evidence="8">
    <location>
        <begin position="1306"/>
        <end position="1316"/>
    </location>
</feature>
<feature type="strand" evidence="8">
    <location>
        <begin position="1319"/>
        <end position="1322"/>
    </location>
</feature>
<feature type="helix" evidence="8">
    <location>
        <begin position="1325"/>
        <end position="1328"/>
    </location>
</feature>
<feature type="strand" evidence="8">
    <location>
        <begin position="1329"/>
        <end position="1331"/>
    </location>
</feature>
<feature type="strand" evidence="8">
    <location>
        <begin position="1335"/>
        <end position="1337"/>
    </location>
</feature>
<feature type="strand" evidence="8">
    <location>
        <begin position="1340"/>
        <end position="1342"/>
    </location>
</feature>
<feature type="helix" evidence="8">
    <location>
        <begin position="1343"/>
        <end position="1345"/>
    </location>
</feature>
<feature type="strand" evidence="8">
    <location>
        <begin position="1361"/>
        <end position="1368"/>
    </location>
</feature>
<feature type="strand" evidence="8">
    <location>
        <begin position="1376"/>
        <end position="1381"/>
    </location>
</feature>
<feature type="helix" evidence="8">
    <location>
        <begin position="1382"/>
        <end position="1395"/>
    </location>
</feature>
<feature type="strand" evidence="8">
    <location>
        <begin position="1403"/>
        <end position="1405"/>
    </location>
</feature>
<feature type="helix" evidence="8">
    <location>
        <begin position="1415"/>
        <end position="1420"/>
    </location>
</feature>
<feature type="helix" evidence="8">
    <location>
        <begin position="1423"/>
        <end position="1425"/>
    </location>
</feature>
<feature type="strand" evidence="8">
    <location>
        <begin position="1428"/>
        <end position="1430"/>
    </location>
</feature>
<feature type="helix" evidence="8">
    <location>
        <begin position="1434"/>
        <end position="1436"/>
    </location>
</feature>
<feature type="helix" evidence="8">
    <location>
        <begin position="1440"/>
        <end position="1449"/>
    </location>
</feature>
<feature type="strand" evidence="8">
    <location>
        <begin position="1454"/>
        <end position="1457"/>
    </location>
</feature>
<feature type="helix" evidence="8">
    <location>
        <begin position="1459"/>
        <end position="1467"/>
    </location>
</feature>
<feature type="strand" evidence="8">
    <location>
        <begin position="1480"/>
        <end position="1483"/>
    </location>
</feature>
<feature type="turn" evidence="8">
    <location>
        <begin position="1491"/>
        <end position="1493"/>
    </location>
</feature>
<feature type="helix" evidence="8">
    <location>
        <begin position="1494"/>
        <end position="1499"/>
    </location>
</feature>
<feature type="strand" evidence="8">
    <location>
        <begin position="1504"/>
        <end position="1509"/>
    </location>
</feature>
<feature type="helix" evidence="8">
    <location>
        <begin position="1512"/>
        <end position="1514"/>
    </location>
</feature>
<feature type="strand" evidence="8">
    <location>
        <begin position="1519"/>
        <end position="1523"/>
    </location>
</feature>
<feature type="strand" evidence="8">
    <location>
        <begin position="1535"/>
        <end position="1537"/>
    </location>
</feature>
<feature type="strand" evidence="8">
    <location>
        <begin position="1541"/>
        <end position="1546"/>
    </location>
</feature>
<feature type="strand" evidence="8">
    <location>
        <begin position="1559"/>
        <end position="1565"/>
    </location>
</feature>
<feature type="helix" evidence="8">
    <location>
        <begin position="1576"/>
        <end position="1582"/>
    </location>
</feature>
<feature type="strand" evidence="8">
    <location>
        <begin position="1583"/>
        <end position="1585"/>
    </location>
</feature>
<feature type="helix" evidence="8">
    <location>
        <begin position="1587"/>
        <end position="1589"/>
    </location>
</feature>
<feature type="strand" evidence="8">
    <location>
        <begin position="1593"/>
        <end position="1603"/>
    </location>
</feature>
<feature type="strand" evidence="8">
    <location>
        <begin position="1609"/>
        <end position="1614"/>
    </location>
</feature>
<comment type="function">
    <text>Activates valine (or leucine, but much less frequently), and then glycine and catalyzes the formation of the peptide bond in the first step of peptide synthesis. This enzyme may also play a role in N-formylation of the first amino acid residue in the synthesized dipeptide.</text>
</comment>
<comment type="cofactor">
    <cofactor evidence="2">
        <name>pantetheine 4'-phosphate</name>
        <dbReference type="ChEBI" id="CHEBI:47942"/>
    </cofactor>
    <text evidence="2">Binds 2 phosphopantetheines covalently.</text>
</comment>
<comment type="biophysicochemical properties">
    <kinetics>
        <KM>0.84 mM for valine</KM>
        <KM>2.4 mM for isoleucine</KM>
    </kinetics>
</comment>
<comment type="subunit">
    <text>Large multienzyme complex composed of 4 subunits; LgrA, LgrB, LgrC and LgrD.</text>
</comment>
<comment type="domain">
    <text>Two module-bearing peptide synthase with a C-terminal epimerization domain, which is probably inactive. Each module incorporates one amino acid into the peptide product and can be further subdivided into domains responsible for substrate adenylation, thiolation, condensation (not for the initiation module), and epimerization (optional). At the N-terminus, contains a N-formyltransferase domain that is probably responsible for the formylation of the first incorporated amino acid.</text>
</comment>
<comment type="miscellaneous">
    <text>Linear gramicidin is a pentadecapeptide antibiotic produced during sporulation.</text>
</comment>
<comment type="similarity">
    <text evidence="2">Belongs to the ATP-dependent AMP-binding enzyme family.</text>
</comment>
<dbReference type="EMBL" id="AJ566197">
    <property type="protein sequence ID" value="CAD92849.1"/>
    <property type="molecule type" value="Genomic_DNA"/>
</dbReference>
<dbReference type="PDB" id="5ES5">
    <property type="method" value="X-ray"/>
    <property type="resolution" value="2.80 A"/>
    <property type="chains" value="A/B=2-766"/>
</dbReference>
<dbReference type="PDB" id="5ES6">
    <property type="method" value="X-ray"/>
    <property type="resolution" value="2.46 A"/>
    <property type="chains" value="A=2-684"/>
</dbReference>
<dbReference type="PDB" id="5ES7">
    <property type="method" value="X-ray"/>
    <property type="resolution" value="2.81 A"/>
    <property type="chains" value="A=2-684"/>
</dbReference>
<dbReference type="PDB" id="5ES8">
    <property type="method" value="X-ray"/>
    <property type="resolution" value="2.55 A"/>
    <property type="chains" value="A/B=2-766"/>
</dbReference>
<dbReference type="PDB" id="5ES9">
    <property type="method" value="X-ray"/>
    <property type="resolution" value="3.77 A"/>
    <property type="chains" value="A/B=2-766"/>
</dbReference>
<dbReference type="PDB" id="5JNF">
    <property type="method" value="X-ray"/>
    <property type="resolution" value="2.75 A"/>
    <property type="chains" value="A/B/C/D=2-584"/>
</dbReference>
<dbReference type="PDB" id="6MFW">
    <property type="method" value="X-ray"/>
    <property type="resolution" value="2.50 A"/>
    <property type="chains" value="A=2-1198"/>
</dbReference>
<dbReference type="PDB" id="6MFX">
    <property type="method" value="X-ray"/>
    <property type="resolution" value="2.20 A"/>
    <property type="chains" value="A=2-1198"/>
</dbReference>
<dbReference type="PDB" id="6MFY">
    <property type="method" value="X-ray"/>
    <property type="resolution" value="2.50 A"/>
    <property type="chains" value="A=2-1716"/>
</dbReference>
<dbReference type="PDB" id="6MFZ">
    <property type="method" value="X-ray"/>
    <property type="resolution" value="6.00 A"/>
    <property type="chains" value="A/B=2-1802"/>
</dbReference>
<dbReference type="PDB" id="6MG0">
    <property type="method" value="X-ray"/>
    <property type="resolution" value="6.00 A"/>
    <property type="chains" value="A/B=2-1716"/>
</dbReference>
<dbReference type="PDB" id="6ULZ">
    <property type="method" value="X-ray"/>
    <property type="resolution" value="3.10 A"/>
    <property type="chains" value="A=2-684"/>
</dbReference>
<dbReference type="PDB" id="9BE4">
    <property type="method" value="X-ray"/>
    <property type="resolution" value="3.00 A"/>
    <property type="chains" value="A/B=3-1802"/>
</dbReference>
<dbReference type="PDBsum" id="5ES5"/>
<dbReference type="PDBsum" id="5ES6"/>
<dbReference type="PDBsum" id="5ES7"/>
<dbReference type="PDBsum" id="5ES8"/>
<dbReference type="PDBsum" id="5ES9"/>
<dbReference type="PDBsum" id="5JNF"/>
<dbReference type="PDBsum" id="6MFW"/>
<dbReference type="PDBsum" id="6MFX"/>
<dbReference type="PDBsum" id="6MFY"/>
<dbReference type="PDBsum" id="6MFZ"/>
<dbReference type="PDBsum" id="6MG0"/>
<dbReference type="PDBsum" id="6ULZ"/>
<dbReference type="PDBsum" id="9BE4"/>
<dbReference type="SMR" id="Q70LM7"/>
<dbReference type="STRING" id="54914.AV540_01965"/>
<dbReference type="EvolutionaryTrace" id="Q70LM7"/>
<dbReference type="GO" id="GO:0005737">
    <property type="term" value="C:cytoplasm"/>
    <property type="evidence" value="ECO:0007669"/>
    <property type="project" value="TreeGrafter"/>
</dbReference>
<dbReference type="GO" id="GO:0016874">
    <property type="term" value="F:ligase activity"/>
    <property type="evidence" value="ECO:0007669"/>
    <property type="project" value="UniProtKB-KW"/>
</dbReference>
<dbReference type="GO" id="GO:0031177">
    <property type="term" value="F:phosphopantetheine binding"/>
    <property type="evidence" value="ECO:0007669"/>
    <property type="project" value="InterPro"/>
</dbReference>
<dbReference type="GO" id="GO:0043041">
    <property type="term" value="P:amino acid activation for nonribosomal peptide biosynthetic process"/>
    <property type="evidence" value="ECO:0007669"/>
    <property type="project" value="TreeGrafter"/>
</dbReference>
<dbReference type="GO" id="GO:0017000">
    <property type="term" value="P:antibiotic biosynthetic process"/>
    <property type="evidence" value="ECO:0007669"/>
    <property type="project" value="UniProtKB-KW"/>
</dbReference>
<dbReference type="GO" id="GO:0008610">
    <property type="term" value="P:lipid biosynthetic process"/>
    <property type="evidence" value="ECO:0007669"/>
    <property type="project" value="UniProtKB-ARBA"/>
</dbReference>
<dbReference type="GO" id="GO:0044550">
    <property type="term" value="P:secondary metabolite biosynthetic process"/>
    <property type="evidence" value="ECO:0007669"/>
    <property type="project" value="TreeGrafter"/>
</dbReference>
<dbReference type="CDD" id="cd05930">
    <property type="entry name" value="A_NRPS"/>
    <property type="match status" value="1"/>
</dbReference>
<dbReference type="CDD" id="cd17645">
    <property type="entry name" value="A_NRPS_LgrA-like"/>
    <property type="match status" value="1"/>
</dbReference>
<dbReference type="CDD" id="cd19534">
    <property type="entry name" value="E_NRPS"/>
    <property type="match status" value="1"/>
</dbReference>
<dbReference type="CDD" id="cd08369">
    <property type="entry name" value="FMT_core"/>
    <property type="match status" value="1"/>
</dbReference>
<dbReference type="CDD" id="cd19531">
    <property type="entry name" value="LCL_NRPS-like"/>
    <property type="match status" value="1"/>
</dbReference>
<dbReference type="FunFam" id="3.30.300.30:FF:000010">
    <property type="entry name" value="Enterobactin synthetase component F"/>
    <property type="match status" value="1"/>
</dbReference>
<dbReference type="FunFam" id="3.40.50.12780:FF:000012">
    <property type="entry name" value="Non-ribosomal peptide synthetase"/>
    <property type="match status" value="2"/>
</dbReference>
<dbReference type="FunFam" id="3.40.50.980:FF:000001">
    <property type="entry name" value="Non-ribosomal peptide synthetase"/>
    <property type="match status" value="2"/>
</dbReference>
<dbReference type="FunFam" id="2.30.38.10:FF:000001">
    <property type="entry name" value="Non-ribosomal peptide synthetase PvdI"/>
    <property type="match status" value="2"/>
</dbReference>
<dbReference type="FunFam" id="1.10.1200.10:FF:000005">
    <property type="entry name" value="Nonribosomal peptide synthetase 1"/>
    <property type="match status" value="2"/>
</dbReference>
<dbReference type="Gene3D" id="3.30.300.30">
    <property type="match status" value="2"/>
</dbReference>
<dbReference type="Gene3D" id="3.40.50.980">
    <property type="match status" value="4"/>
</dbReference>
<dbReference type="Gene3D" id="1.10.1200.10">
    <property type="entry name" value="ACP-like"/>
    <property type="match status" value="2"/>
</dbReference>
<dbReference type="Gene3D" id="3.30.559.10">
    <property type="entry name" value="Chloramphenicol acetyltransferase-like domain"/>
    <property type="match status" value="2"/>
</dbReference>
<dbReference type="Gene3D" id="3.40.50.170">
    <property type="entry name" value="Formyl transferase, N-terminal domain"/>
    <property type="match status" value="1"/>
</dbReference>
<dbReference type="Gene3D" id="2.30.38.10">
    <property type="entry name" value="Luciferase, Domain 3"/>
    <property type="match status" value="2"/>
</dbReference>
<dbReference type="Gene3D" id="3.30.559.30">
    <property type="entry name" value="Nonribosomal peptide synthetase, condensation domain"/>
    <property type="match status" value="2"/>
</dbReference>
<dbReference type="InterPro" id="IPR010071">
    <property type="entry name" value="AA_adenyl_dom"/>
</dbReference>
<dbReference type="InterPro" id="IPR036736">
    <property type="entry name" value="ACP-like_sf"/>
</dbReference>
<dbReference type="InterPro" id="IPR025110">
    <property type="entry name" value="AMP-bd_C"/>
</dbReference>
<dbReference type="InterPro" id="IPR045851">
    <property type="entry name" value="AMP-bd_C_sf"/>
</dbReference>
<dbReference type="InterPro" id="IPR020845">
    <property type="entry name" value="AMP-binding_CS"/>
</dbReference>
<dbReference type="InterPro" id="IPR000873">
    <property type="entry name" value="AMP-dep_synth/lig_dom"/>
</dbReference>
<dbReference type="InterPro" id="IPR023213">
    <property type="entry name" value="CAT-like_dom_sf"/>
</dbReference>
<dbReference type="InterPro" id="IPR001242">
    <property type="entry name" value="Condensatn"/>
</dbReference>
<dbReference type="InterPro" id="IPR002376">
    <property type="entry name" value="Formyl_transf_N"/>
</dbReference>
<dbReference type="InterPro" id="IPR036477">
    <property type="entry name" value="Formyl_transf_N_sf"/>
</dbReference>
<dbReference type="InterPro" id="IPR010060">
    <property type="entry name" value="NRPS_synth"/>
</dbReference>
<dbReference type="InterPro" id="IPR020806">
    <property type="entry name" value="PKS_PP-bd"/>
</dbReference>
<dbReference type="InterPro" id="IPR009081">
    <property type="entry name" value="PP-bd_ACP"/>
</dbReference>
<dbReference type="InterPro" id="IPR006162">
    <property type="entry name" value="Ppantetheine_attach_site"/>
</dbReference>
<dbReference type="NCBIfam" id="TIGR01733">
    <property type="entry name" value="AA-adenyl-dom"/>
    <property type="match status" value="2"/>
</dbReference>
<dbReference type="NCBIfam" id="TIGR01720">
    <property type="entry name" value="NRPS-para261"/>
    <property type="match status" value="1"/>
</dbReference>
<dbReference type="NCBIfam" id="NF003417">
    <property type="entry name" value="PRK04813.1"/>
    <property type="match status" value="2"/>
</dbReference>
<dbReference type="PANTHER" id="PTHR45527:SF1">
    <property type="entry name" value="FATTY ACID SYNTHASE"/>
    <property type="match status" value="1"/>
</dbReference>
<dbReference type="PANTHER" id="PTHR45527">
    <property type="entry name" value="NONRIBOSOMAL PEPTIDE SYNTHETASE"/>
    <property type="match status" value="1"/>
</dbReference>
<dbReference type="Pfam" id="PF00501">
    <property type="entry name" value="AMP-binding"/>
    <property type="match status" value="2"/>
</dbReference>
<dbReference type="Pfam" id="PF13193">
    <property type="entry name" value="AMP-binding_C"/>
    <property type="match status" value="2"/>
</dbReference>
<dbReference type="Pfam" id="PF00668">
    <property type="entry name" value="Condensation"/>
    <property type="match status" value="2"/>
</dbReference>
<dbReference type="Pfam" id="PF00551">
    <property type="entry name" value="Formyl_trans_N"/>
    <property type="match status" value="1"/>
</dbReference>
<dbReference type="Pfam" id="PF00550">
    <property type="entry name" value="PP-binding"/>
    <property type="match status" value="2"/>
</dbReference>
<dbReference type="SMART" id="SM00823">
    <property type="entry name" value="PKS_PP"/>
    <property type="match status" value="2"/>
</dbReference>
<dbReference type="SUPFAM" id="SSF56801">
    <property type="entry name" value="Acetyl-CoA synthetase-like"/>
    <property type="match status" value="2"/>
</dbReference>
<dbReference type="SUPFAM" id="SSF47336">
    <property type="entry name" value="ACP-like"/>
    <property type="match status" value="2"/>
</dbReference>
<dbReference type="SUPFAM" id="SSF52777">
    <property type="entry name" value="CoA-dependent acyltransferases"/>
    <property type="match status" value="4"/>
</dbReference>
<dbReference type="SUPFAM" id="SSF53328">
    <property type="entry name" value="Formyltransferase"/>
    <property type="match status" value="1"/>
</dbReference>
<dbReference type="PROSITE" id="PS00455">
    <property type="entry name" value="AMP_BINDING"/>
    <property type="match status" value="2"/>
</dbReference>
<dbReference type="PROSITE" id="PS50075">
    <property type="entry name" value="CARRIER"/>
    <property type="match status" value="2"/>
</dbReference>
<dbReference type="PROSITE" id="PS00012">
    <property type="entry name" value="PHOSPHOPANTETHEINE"/>
    <property type="match status" value="1"/>
</dbReference>
<name>LGRA_BREPA</name>